<evidence type="ECO:0000250" key="1"/>
<evidence type="ECO:0000305" key="2"/>
<sequence length="601" mass="67019">METINTTERLAALRDLMKKNKVDIYIVPSEDSHSSEYIAACDARREFISGFSGSAGCAVVTLDKAALATDDNWLLLKQGLQDVPTWQEWAAEQSESGKVVGVDSTIISAPDARKLLEKVKKRGGSDLVAVEENLVDLVWGDNRPSRPKEPVKVLARGFSGKDVKTKLEDLRKELQKKKSSGFIVSMLDEIAWLFNLRGSDIPYNPVFFSYASVTPSSATLYVDSSKLSEECITHLNDNGVSIREYSKIFSDVEVLSQSLDSEDAKLKKFLVSSRASWALKRALGGDAKVDEVRSPIGDAKSIKNETELEGMRACHIRDGAALIEYFAWLEHQLVVEKVEMDEVIAADKLEQLRSKQKHFVGLSFDTISSTGANAAVIHYKPEPGNCSIIDPKAVYLCDSGAQYFDGTTDTTRTLHFGEPTEMEKKAYTLVLKGNIALDVAVFPKGTSGFALDALARQFLWEEGLDYRHGTGHGVGSYLNVHEGPIGIGTRIQYSEVPLAPGNVISNEPGYYEDGSFGIRIENIIMVKEVETKHQFGDKPYLGFEHVTMVPYCRKLIDETLLTRREKHWLNEYHADIYSKTKDFFKGDELTMSWLEREIEPL</sequence>
<comment type="function">
    <text evidence="1">Catalyzes the removal of a penultimate prolyl residue from the N-termini of peptides.</text>
</comment>
<comment type="catalytic activity">
    <reaction>
        <text>Release of any N-terminal amino acid, including proline, that is linked to proline, even from a dipeptide or tripeptide.</text>
        <dbReference type="EC" id="3.4.11.9"/>
    </reaction>
</comment>
<comment type="cofactor">
    <cofactor evidence="1">
        <name>Mn(2+)</name>
        <dbReference type="ChEBI" id="CHEBI:29035"/>
    </cofactor>
    <text evidence="1">Binds 2 manganese ions per subunit.</text>
</comment>
<comment type="similarity">
    <text evidence="2">Belongs to the peptidase M24B family.</text>
</comment>
<name>AMPP1_SCLS1</name>
<keyword id="KW-0031">Aminopeptidase</keyword>
<keyword id="KW-0378">Hydrolase</keyword>
<keyword id="KW-0464">Manganese</keyword>
<keyword id="KW-0479">Metal-binding</keyword>
<keyword id="KW-0482">Metalloprotease</keyword>
<keyword id="KW-0645">Protease</keyword>
<keyword id="KW-1185">Reference proteome</keyword>
<protein>
    <recommendedName>
        <fullName>Probable Xaa-Pro aminopeptidase P</fullName>
        <shortName>AMPP</shortName>
        <shortName>Aminopeptidase P</shortName>
        <ecNumber>3.4.11.9</ecNumber>
    </recommendedName>
    <alternativeName>
        <fullName>Aminoacylproline aminopeptidase</fullName>
    </alternativeName>
    <alternativeName>
        <fullName>Prolidase</fullName>
    </alternativeName>
</protein>
<dbReference type="EC" id="3.4.11.9"/>
<dbReference type="EMBL" id="CH476621">
    <property type="protein sequence ID" value="EDN90910.1"/>
    <property type="molecule type" value="Genomic_DNA"/>
</dbReference>
<dbReference type="RefSeq" id="XP_001598224.1">
    <property type="nucleotide sequence ID" value="XM_001598174.1"/>
</dbReference>
<dbReference type="SMR" id="A7E4T8"/>
<dbReference type="FunCoup" id="A7E4T8">
    <property type="interactions" value="367"/>
</dbReference>
<dbReference type="STRING" id="665079.A7E4T8"/>
<dbReference type="EnsemblFungi" id="EDN90910">
    <property type="protein sequence ID" value="EDN90910"/>
    <property type="gene ID" value="SS1G_00310"/>
</dbReference>
<dbReference type="GeneID" id="5494870"/>
<dbReference type="KEGG" id="ssl:SS1G_00310"/>
<dbReference type="eggNOG" id="KOG2413">
    <property type="taxonomic scope" value="Eukaryota"/>
</dbReference>
<dbReference type="HOGENOM" id="CLU_011781_2_3_1"/>
<dbReference type="InParanoid" id="A7E4T8"/>
<dbReference type="OMA" id="EPGMILS"/>
<dbReference type="Proteomes" id="UP000001312">
    <property type="component" value="Unassembled WGS sequence"/>
</dbReference>
<dbReference type="GO" id="GO:0005737">
    <property type="term" value="C:cytoplasm"/>
    <property type="evidence" value="ECO:0007669"/>
    <property type="project" value="UniProtKB-ARBA"/>
</dbReference>
<dbReference type="GO" id="GO:0046872">
    <property type="term" value="F:metal ion binding"/>
    <property type="evidence" value="ECO:0007669"/>
    <property type="project" value="UniProtKB-KW"/>
</dbReference>
<dbReference type="GO" id="GO:0070006">
    <property type="term" value="F:metalloaminopeptidase activity"/>
    <property type="evidence" value="ECO:0007669"/>
    <property type="project" value="InterPro"/>
</dbReference>
<dbReference type="GO" id="GO:0006508">
    <property type="term" value="P:proteolysis"/>
    <property type="evidence" value="ECO:0007669"/>
    <property type="project" value="UniProtKB-KW"/>
</dbReference>
<dbReference type="CDD" id="cd01085">
    <property type="entry name" value="APP"/>
    <property type="match status" value="1"/>
</dbReference>
<dbReference type="FunFam" id="3.40.350.10:FF:000010">
    <property type="entry name" value="Probable Xaa-Pro aminopeptidase P"/>
    <property type="match status" value="1"/>
</dbReference>
<dbReference type="FunFam" id="3.90.230.10:FF:000007">
    <property type="entry name" value="Xaa-Pro aminopeptidase P"/>
    <property type="match status" value="1"/>
</dbReference>
<dbReference type="FunFam" id="3.40.350.10:FF:000003">
    <property type="entry name" value="Xaa-pro aminopeptidase P"/>
    <property type="match status" value="1"/>
</dbReference>
<dbReference type="Gene3D" id="3.90.230.10">
    <property type="entry name" value="Creatinase/methionine aminopeptidase superfamily"/>
    <property type="match status" value="1"/>
</dbReference>
<dbReference type="Gene3D" id="3.40.350.10">
    <property type="entry name" value="Creatinase/prolidase N-terminal domain"/>
    <property type="match status" value="2"/>
</dbReference>
<dbReference type="InterPro" id="IPR029149">
    <property type="entry name" value="Creatin/AminoP/Spt16_N"/>
</dbReference>
<dbReference type="InterPro" id="IPR036005">
    <property type="entry name" value="Creatinase/aminopeptidase-like"/>
</dbReference>
<dbReference type="InterPro" id="IPR000587">
    <property type="entry name" value="Creatinase_N"/>
</dbReference>
<dbReference type="InterPro" id="IPR000994">
    <property type="entry name" value="Pept_M24"/>
</dbReference>
<dbReference type="InterPro" id="IPR033740">
    <property type="entry name" value="Pept_M24B"/>
</dbReference>
<dbReference type="InterPro" id="IPR032416">
    <property type="entry name" value="Peptidase_M24_C"/>
</dbReference>
<dbReference type="InterPro" id="IPR001131">
    <property type="entry name" value="Peptidase_M24B_aminopep-P_CS"/>
</dbReference>
<dbReference type="InterPro" id="IPR050422">
    <property type="entry name" value="X-Pro_aminopeptidase_P"/>
</dbReference>
<dbReference type="PANTHER" id="PTHR43763">
    <property type="entry name" value="XAA-PRO AMINOPEPTIDASE 1"/>
    <property type="match status" value="1"/>
</dbReference>
<dbReference type="PANTHER" id="PTHR43763:SF6">
    <property type="entry name" value="XAA-PRO AMINOPEPTIDASE 1"/>
    <property type="match status" value="1"/>
</dbReference>
<dbReference type="Pfam" id="PF01321">
    <property type="entry name" value="Creatinase_N"/>
    <property type="match status" value="1"/>
</dbReference>
<dbReference type="Pfam" id="PF16189">
    <property type="entry name" value="Creatinase_N_2"/>
    <property type="match status" value="1"/>
</dbReference>
<dbReference type="Pfam" id="PF00557">
    <property type="entry name" value="Peptidase_M24"/>
    <property type="match status" value="1"/>
</dbReference>
<dbReference type="Pfam" id="PF16188">
    <property type="entry name" value="Peptidase_M24_C"/>
    <property type="match status" value="1"/>
</dbReference>
<dbReference type="SUPFAM" id="SSF55920">
    <property type="entry name" value="Creatinase/aminopeptidase"/>
    <property type="match status" value="1"/>
</dbReference>
<dbReference type="SUPFAM" id="SSF53092">
    <property type="entry name" value="Creatinase/prolidase N-terminal domain"/>
    <property type="match status" value="1"/>
</dbReference>
<dbReference type="PROSITE" id="PS00491">
    <property type="entry name" value="PROLINE_PEPTIDASE"/>
    <property type="match status" value="1"/>
</dbReference>
<gene>
    <name type="primary">ampp</name>
    <name type="ORF">SS1G_00310</name>
</gene>
<reference key="1">
    <citation type="journal article" date="2011" name="PLoS Genet.">
        <title>Genomic analysis of the necrotrophic fungal pathogens Sclerotinia sclerotiorum and Botrytis cinerea.</title>
        <authorList>
            <person name="Amselem J."/>
            <person name="Cuomo C.A."/>
            <person name="van Kan J.A.L."/>
            <person name="Viaud M."/>
            <person name="Benito E.P."/>
            <person name="Couloux A."/>
            <person name="Coutinho P.M."/>
            <person name="de Vries R.P."/>
            <person name="Dyer P.S."/>
            <person name="Fillinger S."/>
            <person name="Fournier E."/>
            <person name="Gout L."/>
            <person name="Hahn M."/>
            <person name="Kohn L."/>
            <person name="Lapalu N."/>
            <person name="Plummer K.M."/>
            <person name="Pradier J.-M."/>
            <person name="Quevillon E."/>
            <person name="Sharon A."/>
            <person name="Simon A."/>
            <person name="ten Have A."/>
            <person name="Tudzynski B."/>
            <person name="Tudzynski P."/>
            <person name="Wincker P."/>
            <person name="Andrew M."/>
            <person name="Anthouard V."/>
            <person name="Beever R.E."/>
            <person name="Beffa R."/>
            <person name="Benoit I."/>
            <person name="Bouzid O."/>
            <person name="Brault B."/>
            <person name="Chen Z."/>
            <person name="Choquer M."/>
            <person name="Collemare J."/>
            <person name="Cotton P."/>
            <person name="Danchin E.G."/>
            <person name="Da Silva C."/>
            <person name="Gautier A."/>
            <person name="Giraud C."/>
            <person name="Giraud T."/>
            <person name="Gonzalez C."/>
            <person name="Grossetete S."/>
            <person name="Gueldener U."/>
            <person name="Henrissat B."/>
            <person name="Howlett B.J."/>
            <person name="Kodira C."/>
            <person name="Kretschmer M."/>
            <person name="Lappartient A."/>
            <person name="Leroch M."/>
            <person name="Levis C."/>
            <person name="Mauceli E."/>
            <person name="Neuveglise C."/>
            <person name="Oeser B."/>
            <person name="Pearson M."/>
            <person name="Poulain J."/>
            <person name="Poussereau N."/>
            <person name="Quesneville H."/>
            <person name="Rascle C."/>
            <person name="Schumacher J."/>
            <person name="Segurens B."/>
            <person name="Sexton A."/>
            <person name="Silva E."/>
            <person name="Sirven C."/>
            <person name="Soanes D.M."/>
            <person name="Talbot N.J."/>
            <person name="Templeton M."/>
            <person name="Yandava C."/>
            <person name="Yarden O."/>
            <person name="Zeng Q."/>
            <person name="Rollins J.A."/>
            <person name="Lebrun M.-H."/>
            <person name="Dickman M."/>
        </authorList>
    </citation>
    <scope>NUCLEOTIDE SEQUENCE [LARGE SCALE GENOMIC DNA]</scope>
    <source>
        <strain>ATCC 18683 / 1980 / Ss-1</strain>
    </source>
</reference>
<accession>A7E4T8</accession>
<feature type="chain" id="PRO_0000411809" description="Probable Xaa-Pro aminopeptidase P">
    <location>
        <begin position="1"/>
        <end position="601"/>
    </location>
</feature>
<feature type="binding site" evidence="1">
    <location>
        <position position="398"/>
    </location>
    <ligand>
        <name>Mn(2+)</name>
        <dbReference type="ChEBI" id="CHEBI:29035"/>
        <label>2</label>
    </ligand>
</feature>
<feature type="binding site" evidence="1">
    <location>
        <position position="409"/>
    </location>
    <ligand>
        <name>Mn(2+)</name>
        <dbReference type="ChEBI" id="CHEBI:29035"/>
        <label>1</label>
    </ligand>
</feature>
<feature type="binding site" evidence="1">
    <location>
        <position position="409"/>
    </location>
    <ligand>
        <name>Mn(2+)</name>
        <dbReference type="ChEBI" id="CHEBI:29035"/>
        <label>2</label>
    </ligand>
</feature>
<feature type="binding site" evidence="1">
    <location>
        <position position="507"/>
    </location>
    <ligand>
        <name>Mn(2+)</name>
        <dbReference type="ChEBI" id="CHEBI:29035"/>
        <label>1</label>
    </ligand>
</feature>
<feature type="binding site" evidence="1">
    <location>
        <position position="521"/>
    </location>
    <ligand>
        <name>Mn(2+)</name>
        <dbReference type="ChEBI" id="CHEBI:29035"/>
        <label>1</label>
    </ligand>
</feature>
<feature type="binding site" evidence="1">
    <location>
        <position position="521"/>
    </location>
    <ligand>
        <name>Mn(2+)</name>
        <dbReference type="ChEBI" id="CHEBI:29035"/>
        <label>2</label>
    </ligand>
</feature>
<proteinExistence type="inferred from homology"/>
<organism>
    <name type="scientific">Sclerotinia sclerotiorum (strain ATCC 18683 / 1980 / Ss-1)</name>
    <name type="common">White mold</name>
    <name type="synonym">Whetzelinia sclerotiorum</name>
    <dbReference type="NCBI Taxonomy" id="665079"/>
    <lineage>
        <taxon>Eukaryota</taxon>
        <taxon>Fungi</taxon>
        <taxon>Dikarya</taxon>
        <taxon>Ascomycota</taxon>
        <taxon>Pezizomycotina</taxon>
        <taxon>Leotiomycetes</taxon>
        <taxon>Helotiales</taxon>
        <taxon>Sclerotiniaceae</taxon>
        <taxon>Sclerotinia</taxon>
    </lineage>
</organism>